<reference key="1">
    <citation type="journal article" date="2006" name="Proc. Natl. Acad. Sci. U.S.A.">
        <title>Comparative genomics of the lactic acid bacteria.</title>
        <authorList>
            <person name="Makarova K.S."/>
            <person name="Slesarev A."/>
            <person name="Wolf Y.I."/>
            <person name="Sorokin A."/>
            <person name="Mirkin B."/>
            <person name="Koonin E.V."/>
            <person name="Pavlov A."/>
            <person name="Pavlova N."/>
            <person name="Karamychev V."/>
            <person name="Polouchine N."/>
            <person name="Shakhova V."/>
            <person name="Grigoriev I."/>
            <person name="Lou Y."/>
            <person name="Rohksar D."/>
            <person name="Lucas S."/>
            <person name="Huang K."/>
            <person name="Goodstein D.M."/>
            <person name="Hawkins T."/>
            <person name="Plengvidhya V."/>
            <person name="Welker D."/>
            <person name="Hughes J."/>
            <person name="Goh Y."/>
            <person name="Benson A."/>
            <person name="Baldwin K."/>
            <person name="Lee J.-H."/>
            <person name="Diaz-Muniz I."/>
            <person name="Dosti B."/>
            <person name="Smeianov V."/>
            <person name="Wechter W."/>
            <person name="Barabote R."/>
            <person name="Lorca G."/>
            <person name="Altermann E."/>
            <person name="Barrangou R."/>
            <person name="Ganesan B."/>
            <person name="Xie Y."/>
            <person name="Rawsthorne H."/>
            <person name="Tamir D."/>
            <person name="Parker C."/>
            <person name="Breidt F."/>
            <person name="Broadbent J.R."/>
            <person name="Hutkins R."/>
            <person name="O'Sullivan D."/>
            <person name="Steele J."/>
            <person name="Unlu G."/>
            <person name="Saier M.H. Jr."/>
            <person name="Klaenhammer T."/>
            <person name="Richardson P."/>
            <person name="Kozyavkin S."/>
            <person name="Weimer B.C."/>
            <person name="Mills D.A."/>
        </authorList>
    </citation>
    <scope>NUCLEOTIDE SEQUENCE [LARGE SCALE GENOMIC DNA]</scope>
    <source>
        <strain>ATCC 25745 / CCUG 21536 / LMG 10740 / 183-1w</strain>
    </source>
</reference>
<name>RECF_PEDPA</name>
<dbReference type="EMBL" id="CP000422">
    <property type="protein sequence ID" value="ABJ67115.1"/>
    <property type="molecule type" value="Genomic_DNA"/>
</dbReference>
<dbReference type="RefSeq" id="WP_011672764.1">
    <property type="nucleotide sequence ID" value="NC_008525.1"/>
</dbReference>
<dbReference type="SMR" id="Q03I57"/>
<dbReference type="STRING" id="278197.PEPE_0004"/>
<dbReference type="GeneID" id="33062480"/>
<dbReference type="KEGG" id="ppe:PEPE_0004"/>
<dbReference type="eggNOG" id="COG1195">
    <property type="taxonomic scope" value="Bacteria"/>
</dbReference>
<dbReference type="HOGENOM" id="CLU_040267_0_1_9"/>
<dbReference type="OrthoDB" id="9803889at2"/>
<dbReference type="Proteomes" id="UP000000773">
    <property type="component" value="Chromosome"/>
</dbReference>
<dbReference type="GO" id="GO:0005737">
    <property type="term" value="C:cytoplasm"/>
    <property type="evidence" value="ECO:0007669"/>
    <property type="project" value="UniProtKB-SubCell"/>
</dbReference>
<dbReference type="GO" id="GO:0005524">
    <property type="term" value="F:ATP binding"/>
    <property type="evidence" value="ECO:0007669"/>
    <property type="project" value="UniProtKB-UniRule"/>
</dbReference>
<dbReference type="GO" id="GO:0003697">
    <property type="term" value="F:single-stranded DNA binding"/>
    <property type="evidence" value="ECO:0007669"/>
    <property type="project" value="UniProtKB-UniRule"/>
</dbReference>
<dbReference type="GO" id="GO:0006260">
    <property type="term" value="P:DNA replication"/>
    <property type="evidence" value="ECO:0007669"/>
    <property type="project" value="UniProtKB-UniRule"/>
</dbReference>
<dbReference type="GO" id="GO:0000731">
    <property type="term" value="P:DNA synthesis involved in DNA repair"/>
    <property type="evidence" value="ECO:0007669"/>
    <property type="project" value="TreeGrafter"/>
</dbReference>
<dbReference type="GO" id="GO:0006302">
    <property type="term" value="P:double-strand break repair"/>
    <property type="evidence" value="ECO:0007669"/>
    <property type="project" value="TreeGrafter"/>
</dbReference>
<dbReference type="GO" id="GO:0009432">
    <property type="term" value="P:SOS response"/>
    <property type="evidence" value="ECO:0007669"/>
    <property type="project" value="UniProtKB-UniRule"/>
</dbReference>
<dbReference type="CDD" id="cd03242">
    <property type="entry name" value="ABC_RecF"/>
    <property type="match status" value="1"/>
</dbReference>
<dbReference type="FunFam" id="1.20.1050.90:FF:000002">
    <property type="entry name" value="DNA replication and repair protein RecF"/>
    <property type="match status" value="1"/>
</dbReference>
<dbReference type="Gene3D" id="3.40.50.300">
    <property type="entry name" value="P-loop containing nucleotide triphosphate hydrolases"/>
    <property type="match status" value="1"/>
</dbReference>
<dbReference type="Gene3D" id="1.20.1050.90">
    <property type="entry name" value="RecF/RecN/SMC, N-terminal domain"/>
    <property type="match status" value="1"/>
</dbReference>
<dbReference type="HAMAP" id="MF_00365">
    <property type="entry name" value="RecF"/>
    <property type="match status" value="1"/>
</dbReference>
<dbReference type="InterPro" id="IPR001238">
    <property type="entry name" value="DNA-binding_RecF"/>
</dbReference>
<dbReference type="InterPro" id="IPR018078">
    <property type="entry name" value="DNA-binding_RecF_CS"/>
</dbReference>
<dbReference type="InterPro" id="IPR027417">
    <property type="entry name" value="P-loop_NTPase"/>
</dbReference>
<dbReference type="InterPro" id="IPR003395">
    <property type="entry name" value="RecF/RecN/SMC_N"/>
</dbReference>
<dbReference type="InterPro" id="IPR042174">
    <property type="entry name" value="RecF_2"/>
</dbReference>
<dbReference type="NCBIfam" id="TIGR00611">
    <property type="entry name" value="recf"/>
    <property type="match status" value="1"/>
</dbReference>
<dbReference type="PANTHER" id="PTHR32182">
    <property type="entry name" value="DNA REPLICATION AND REPAIR PROTEIN RECF"/>
    <property type="match status" value="1"/>
</dbReference>
<dbReference type="PANTHER" id="PTHR32182:SF0">
    <property type="entry name" value="DNA REPLICATION AND REPAIR PROTEIN RECF"/>
    <property type="match status" value="1"/>
</dbReference>
<dbReference type="Pfam" id="PF02463">
    <property type="entry name" value="SMC_N"/>
    <property type="match status" value="1"/>
</dbReference>
<dbReference type="SUPFAM" id="SSF52540">
    <property type="entry name" value="P-loop containing nucleoside triphosphate hydrolases"/>
    <property type="match status" value="1"/>
</dbReference>
<dbReference type="PROSITE" id="PS00617">
    <property type="entry name" value="RECF_1"/>
    <property type="match status" value="1"/>
</dbReference>
<dbReference type="PROSITE" id="PS00618">
    <property type="entry name" value="RECF_2"/>
    <property type="match status" value="1"/>
</dbReference>
<comment type="function">
    <text evidence="1">The RecF protein is involved in DNA metabolism; it is required for DNA replication and normal SOS inducibility. RecF binds preferentially to single-stranded, linear DNA. It also seems to bind ATP.</text>
</comment>
<comment type="subcellular location">
    <subcellularLocation>
        <location evidence="1">Cytoplasm</location>
    </subcellularLocation>
</comment>
<comment type="similarity">
    <text evidence="1">Belongs to the RecF family.</text>
</comment>
<organism>
    <name type="scientific">Pediococcus pentosaceus (strain ATCC 25745 / CCUG 21536 / LMG 10740 / 183-1w)</name>
    <dbReference type="NCBI Taxonomy" id="278197"/>
    <lineage>
        <taxon>Bacteria</taxon>
        <taxon>Bacillati</taxon>
        <taxon>Bacillota</taxon>
        <taxon>Bacilli</taxon>
        <taxon>Lactobacillales</taxon>
        <taxon>Lactobacillaceae</taxon>
        <taxon>Pediococcus</taxon>
    </lineage>
</organism>
<protein>
    <recommendedName>
        <fullName evidence="1">DNA replication and repair protein RecF</fullName>
    </recommendedName>
</protein>
<keyword id="KW-0067">ATP-binding</keyword>
<keyword id="KW-0963">Cytoplasm</keyword>
<keyword id="KW-0227">DNA damage</keyword>
<keyword id="KW-0234">DNA repair</keyword>
<keyword id="KW-0235">DNA replication</keyword>
<keyword id="KW-0238">DNA-binding</keyword>
<keyword id="KW-0547">Nucleotide-binding</keyword>
<keyword id="KW-0742">SOS response</keyword>
<feature type="chain" id="PRO_1000048553" description="DNA replication and repair protein RecF">
    <location>
        <begin position="1"/>
        <end position="374"/>
    </location>
</feature>
<feature type="binding site" evidence="1">
    <location>
        <begin position="30"/>
        <end position="37"/>
    </location>
    <ligand>
        <name>ATP</name>
        <dbReference type="ChEBI" id="CHEBI:30616"/>
    </ligand>
</feature>
<evidence type="ECO:0000255" key="1">
    <source>
        <dbReference type="HAMAP-Rule" id="MF_00365"/>
    </source>
</evidence>
<sequence>MYLKTLELHNFRNYADLVVEFGSGINVLLGENAQGKTNLLESIYFLALTRSHRTNSDRDLISWKTKAARVSGSVQKEHTVTPLEINLSSKGKNAKVNHLEQSRLSQYVGQLNVILFAPEDLSIVKGSPAVRRKFIDMEFGQMSSKYLYNSAQYRSVLKQRNQYIKQLQFNPKGDQVYLDVLSDQLAAHGAEIIFQRIQFLKKLEKWSQEVHKEISQGKEKLSFQYVSPISSDQADTTEKIYAALQALFQKQREKELQQGKTLVGPHLDDVRFMVNDKNVSTFGSQGQQRTTALSVKLAEIDLMKEETGEYPVLLLDDVLSELDDSRQTHLLTAIQNKVQTFITTTSLSGVAQQLINEPHVFNIDHGVLMQSKEE</sequence>
<accession>Q03I57</accession>
<gene>
    <name evidence="1" type="primary">recF</name>
    <name type="ordered locus">PEPE_0004</name>
</gene>
<proteinExistence type="inferred from homology"/>